<gene>
    <name evidence="1" type="primary">erpA</name>
    <name type="ordered locus">ABSDF0012</name>
</gene>
<protein>
    <recommendedName>
        <fullName evidence="1">Iron-sulfur cluster insertion protein ErpA</fullName>
    </recommendedName>
</protein>
<accession>B0VML0</accession>
<organism>
    <name type="scientific">Acinetobacter baumannii (strain SDF)</name>
    <dbReference type="NCBI Taxonomy" id="509170"/>
    <lineage>
        <taxon>Bacteria</taxon>
        <taxon>Pseudomonadati</taxon>
        <taxon>Pseudomonadota</taxon>
        <taxon>Gammaproteobacteria</taxon>
        <taxon>Moraxellales</taxon>
        <taxon>Moraxellaceae</taxon>
        <taxon>Acinetobacter</taxon>
        <taxon>Acinetobacter calcoaceticus/baumannii complex</taxon>
    </lineage>
</organism>
<feature type="chain" id="PRO_1000144888" description="Iron-sulfur cluster insertion protein ErpA">
    <location>
        <begin position="1"/>
        <end position="111"/>
    </location>
</feature>
<feature type="binding site" evidence="1">
    <location>
        <position position="39"/>
    </location>
    <ligand>
        <name>iron-sulfur cluster</name>
        <dbReference type="ChEBI" id="CHEBI:30408"/>
    </ligand>
</feature>
<feature type="binding site" evidence="1">
    <location>
        <position position="103"/>
    </location>
    <ligand>
        <name>iron-sulfur cluster</name>
        <dbReference type="ChEBI" id="CHEBI:30408"/>
    </ligand>
</feature>
<feature type="binding site" evidence="1">
    <location>
        <position position="105"/>
    </location>
    <ligand>
        <name>iron-sulfur cluster</name>
        <dbReference type="ChEBI" id="CHEBI:30408"/>
    </ligand>
</feature>
<evidence type="ECO:0000255" key="1">
    <source>
        <dbReference type="HAMAP-Rule" id="MF_01380"/>
    </source>
</evidence>
<reference key="1">
    <citation type="journal article" date="2008" name="PLoS ONE">
        <title>Comparative analysis of Acinetobacters: three genomes for three lifestyles.</title>
        <authorList>
            <person name="Vallenet D."/>
            <person name="Nordmann P."/>
            <person name="Barbe V."/>
            <person name="Poirel L."/>
            <person name="Mangenot S."/>
            <person name="Bataille E."/>
            <person name="Dossat C."/>
            <person name="Gas S."/>
            <person name="Kreimeyer A."/>
            <person name="Lenoble P."/>
            <person name="Oztas S."/>
            <person name="Poulain J."/>
            <person name="Segurens B."/>
            <person name="Robert C."/>
            <person name="Abergel C."/>
            <person name="Claverie J.-M."/>
            <person name="Raoult D."/>
            <person name="Medigue C."/>
            <person name="Weissenbach J."/>
            <person name="Cruveiller S."/>
        </authorList>
    </citation>
    <scope>NUCLEOTIDE SEQUENCE [LARGE SCALE GENOMIC DNA]</scope>
    <source>
        <strain>SDF</strain>
    </source>
</reference>
<comment type="function">
    <text evidence="1">Required for insertion of 4Fe-4S clusters for at least IspG.</text>
</comment>
<comment type="cofactor">
    <cofactor evidence="1">
        <name>iron-sulfur cluster</name>
        <dbReference type="ChEBI" id="CHEBI:30408"/>
    </cofactor>
    <text evidence="1">Binds 1 iron-sulfur cluster per subunit.</text>
</comment>
<comment type="subunit">
    <text evidence="1">Homodimer.</text>
</comment>
<comment type="similarity">
    <text evidence="1">Belongs to the HesB/IscA family.</text>
</comment>
<proteinExistence type="inferred from homology"/>
<name>ERPA_ACIBS</name>
<dbReference type="EMBL" id="CU468230">
    <property type="protein sequence ID" value="CAO99432.1"/>
    <property type="molecule type" value="Genomic_DNA"/>
</dbReference>
<dbReference type="SMR" id="B0VML0"/>
<dbReference type="KEGG" id="abm:ABSDF0012"/>
<dbReference type="HOGENOM" id="CLU_069054_5_3_6"/>
<dbReference type="Proteomes" id="UP000001741">
    <property type="component" value="Chromosome"/>
</dbReference>
<dbReference type="GO" id="GO:0051537">
    <property type="term" value="F:2 iron, 2 sulfur cluster binding"/>
    <property type="evidence" value="ECO:0007669"/>
    <property type="project" value="TreeGrafter"/>
</dbReference>
<dbReference type="GO" id="GO:0051539">
    <property type="term" value="F:4 iron, 4 sulfur cluster binding"/>
    <property type="evidence" value="ECO:0007669"/>
    <property type="project" value="TreeGrafter"/>
</dbReference>
<dbReference type="GO" id="GO:0005506">
    <property type="term" value="F:iron ion binding"/>
    <property type="evidence" value="ECO:0007669"/>
    <property type="project" value="UniProtKB-UniRule"/>
</dbReference>
<dbReference type="GO" id="GO:0016226">
    <property type="term" value="P:iron-sulfur cluster assembly"/>
    <property type="evidence" value="ECO:0007669"/>
    <property type="project" value="UniProtKB-UniRule"/>
</dbReference>
<dbReference type="FunFam" id="2.60.300.12:FF:000002">
    <property type="entry name" value="Iron-sulfur cluster insertion protein ErpA"/>
    <property type="match status" value="1"/>
</dbReference>
<dbReference type="Gene3D" id="2.60.300.12">
    <property type="entry name" value="HesB-like domain"/>
    <property type="match status" value="1"/>
</dbReference>
<dbReference type="HAMAP" id="MF_01380">
    <property type="entry name" value="Fe_S_insert_ErpA"/>
    <property type="match status" value="1"/>
</dbReference>
<dbReference type="InterPro" id="IPR000361">
    <property type="entry name" value="FeS_biogenesis"/>
</dbReference>
<dbReference type="InterPro" id="IPR016092">
    <property type="entry name" value="FeS_cluster_insertion"/>
</dbReference>
<dbReference type="InterPro" id="IPR017870">
    <property type="entry name" value="FeS_cluster_insertion_CS"/>
</dbReference>
<dbReference type="InterPro" id="IPR023063">
    <property type="entry name" value="FeS_cluster_insertion_RrpA"/>
</dbReference>
<dbReference type="InterPro" id="IPR035903">
    <property type="entry name" value="HesB-like_dom_sf"/>
</dbReference>
<dbReference type="NCBIfam" id="TIGR00049">
    <property type="entry name" value="iron-sulfur cluster assembly accessory protein"/>
    <property type="match status" value="1"/>
</dbReference>
<dbReference type="NCBIfam" id="NF010147">
    <property type="entry name" value="PRK13623.1"/>
    <property type="match status" value="1"/>
</dbReference>
<dbReference type="PANTHER" id="PTHR43011">
    <property type="entry name" value="IRON-SULFUR CLUSTER ASSEMBLY 2 HOMOLOG, MITOCHONDRIAL"/>
    <property type="match status" value="1"/>
</dbReference>
<dbReference type="PANTHER" id="PTHR43011:SF1">
    <property type="entry name" value="IRON-SULFUR CLUSTER ASSEMBLY 2 HOMOLOG, MITOCHONDRIAL"/>
    <property type="match status" value="1"/>
</dbReference>
<dbReference type="Pfam" id="PF01521">
    <property type="entry name" value="Fe-S_biosyn"/>
    <property type="match status" value="1"/>
</dbReference>
<dbReference type="SUPFAM" id="SSF89360">
    <property type="entry name" value="HesB-like domain"/>
    <property type="match status" value="1"/>
</dbReference>
<dbReference type="PROSITE" id="PS01152">
    <property type="entry name" value="HESB"/>
    <property type="match status" value="1"/>
</dbReference>
<keyword id="KW-0408">Iron</keyword>
<keyword id="KW-0411">Iron-sulfur</keyword>
<keyword id="KW-0479">Metal-binding</keyword>
<sequence>MNAQALVLTDNAANKVRQLRDSEGNDDLMLRVYVTGGGCSGFSYGFNFAESINEDDAEFVNGDVKMLVDSLSYQYLVGSVVDYVEGLEGSRFIVQNPNATTTCGCGSSFSI</sequence>